<name>GLYC_TACVF</name>
<proteinExistence type="inferred from homology"/>
<organism>
    <name type="scientific">Tacaribe virus (strain Franze-Fernandez)</name>
    <name type="common">TCRV</name>
    <dbReference type="NCBI Taxonomy" id="928313"/>
    <lineage>
        <taxon>Viruses</taxon>
        <taxon>Riboviria</taxon>
        <taxon>Orthornavirae</taxon>
        <taxon>Negarnaviricota</taxon>
        <taxon>Polyploviricotina</taxon>
        <taxon>Ellioviricetes</taxon>
        <taxon>Bunyavirales</taxon>
        <taxon>Arenaviridae</taxon>
        <taxon>Mammarenavirus</taxon>
        <taxon>Tacaribe virus</taxon>
    </lineage>
</organism>
<evidence type="ECO:0000250" key="1">
    <source>
        <dbReference type="UniProtKB" id="P26313"/>
    </source>
</evidence>
<evidence type="ECO:0000255" key="2">
    <source>
        <dbReference type="HAMAP-Rule" id="MF_04084"/>
    </source>
</evidence>
<keyword id="KW-1015">Disulfide bond</keyword>
<keyword id="KW-1170">Fusion of virus membrane with host endosomal membrane</keyword>
<keyword id="KW-1168">Fusion of virus membrane with host membrane</keyword>
<keyword id="KW-0325">Glycoprotein</keyword>
<keyword id="KW-1032">Host cell membrane</keyword>
<keyword id="KW-1038">Host endoplasmic reticulum</keyword>
<keyword id="KW-1040">Host Golgi apparatus</keyword>
<keyword id="KW-1043">Host membrane</keyword>
<keyword id="KW-0945">Host-virus interaction</keyword>
<keyword id="KW-0449">Lipoprotein</keyword>
<keyword id="KW-0472">Membrane</keyword>
<keyword id="KW-0479">Metal-binding</keyword>
<keyword id="KW-0519">Myristate</keyword>
<keyword id="KW-1185">Reference proteome</keyword>
<keyword id="KW-0812">Transmembrane</keyword>
<keyword id="KW-1133">Transmembrane helix</keyword>
<keyword id="KW-1161">Viral attachment to host cell</keyword>
<keyword id="KW-0261">Viral envelope protein</keyword>
<keyword id="KW-1162">Viral penetration into host cytoplasm</keyword>
<keyword id="KW-0946">Virion</keyword>
<keyword id="KW-1164">Virus endocytosis by host</keyword>
<keyword id="KW-1160">Virus entry into host cell</keyword>
<keyword id="KW-0862">Zinc</keyword>
<reference key="1">
    <citation type="journal article" date="1987" name="Virus Res.">
        <title>Molecular structure and early events in the replication of Tacaribe arenavirus S RNA.</title>
        <authorList>
            <person name="Franze-Fernandez M.T."/>
            <person name="Zetina C."/>
            <person name="Iapalucci S."/>
            <person name="Lucero M.A."/>
            <person name="Bouissou C."/>
            <person name="Lopez R."/>
            <person name="Rey O."/>
            <person name="Daheli M."/>
            <person name="Cohen G.N."/>
            <person name="Zakin M.M."/>
        </authorList>
    </citation>
    <scope>NUCLEOTIDE SEQUENCE [GENOMIC RNA]</scope>
</reference>
<protein>
    <recommendedName>
        <fullName evidence="2">Pre-glycoprotein polyprotein GP complex</fullName>
        <shortName evidence="2">Pre-GP-C</shortName>
    </recommendedName>
    <component>
        <recommendedName>
            <fullName evidence="2">Stable signal peptide</fullName>
            <shortName evidence="2">SSP</shortName>
        </recommendedName>
    </component>
    <component>
        <recommendedName>
            <fullName evidence="2">Glycoprotein G1</fullName>
            <shortName evidence="2">GP1</shortName>
        </recommendedName>
    </component>
    <component>
        <recommendedName>
            <fullName evidence="2">Glycoprotein G2</fullName>
            <shortName evidence="2">GP2</shortName>
        </recommendedName>
    </component>
</protein>
<sequence length="495" mass="56943">MGQFISFMQEIPIFLQEALNIALVAVSLICIVKGLVNLYRCGLFQLMVFLVLAGRSCSEETFKIGMHTKFQEVSLSLSALLTNQSHELPMLCLANKTHLYLKSGRSSFKINIDSVTVLTRSEVNLTSINLTRSIDVFVHSPKLGSCFESDEEWVVAWWIEAIGHRWDQDPGLLCRNKTKTEGKLIQINISRADGNVHYGWRLKNGLDHIYRGREEPCFEGEQCLIKIQPEDWPTDCKADHTNTFRFLSRSQKSIAVGRTLKAFFSWSLTDPLGNEAPGGYCLEKWMLVASELKCFGNTAIAKCNQNHDSEFCDMLRLFDYNKNAIKTLNEETKTRVNVLSHTINALISDNLLMKNKIRELMSVPYCNYTRFWYVNHTLSGQHSLPRCWMIRNNSYLNSSEFRNEWILESDFLISEMLGKEYSERQGRTPITLVDICFWSTVFFTSTLFLHLIGFPTHEHIRGEGCPLPHRLNSMGGCRCGKYLPLKKPTIWHRRH</sequence>
<accession>P18141</accession>
<organismHost>
    <name type="scientific">Artibeus</name>
    <name type="common">neotropical fruit bats</name>
    <dbReference type="NCBI Taxonomy" id="9416"/>
</organismHost>
<comment type="function">
    <molecule>Stable signal peptide</molecule>
    <text evidence="2">Functions as a cleaved signal peptide that is retained as the third component of the GP complex (GP-C). Helps to stabilize the spike complex in its native conformation. The SSP is required for efficient glycoprotein expression, post-translational maturation cleavage of G1 and G2, glycoprotein transport to the cell surface plasma membrane, formation of infectious virus particles, and acid pH-dependent glycoprotein-mediated cell fusion.</text>
</comment>
<comment type="function">
    <molecule>Glycoprotein G1</molecule>
    <text evidence="2">Forms the virion spikes together with glycoprotein G2. The glycoprotein spike trimers are connected to the underlying matrix. Interacts with the host receptor leading to virus endocytosis.</text>
</comment>
<comment type="function">
    <molecule>Glycoprotein G2</molecule>
    <text evidence="2">Forms the virion spikes together with glycoprotein G1. The glycoprotein spike trimers are connected to the underlying matrix. Class I viral fusion protein that directs fusion of viral and host endosomal membranes, leading to delivery of the nucleocapsid into the cytoplasm. Membrane fusion is mediated by irreversible conformational changes induced by acidification.</text>
</comment>
<comment type="subunit">
    <molecule>Stable signal peptide</molecule>
    <text evidence="2">Interacts with glycoprotein G2. Part of the GP complex (GP-C) together with glycoprotein G1 and glycoprotein G2. The GP-complex interacts with protein Z, which interacts with ribonucleocapsid; these interactions may induce virion budding.</text>
</comment>
<comment type="subunit">
    <molecule>Glycoprotein G1</molecule>
    <text evidence="2">Homotrimer; disulfide-linked. In pre-fusion state, G1 homotrimers bind G2 homotrimers via ionic interactions. Part of the GP complex (GP-C) together with glycoprotein G2 and the stable signal peptide. The GP-complex interacts with protein Z, which interacts with ribonucleocapsid; these interactions may induce virion budding.</text>
</comment>
<comment type="subunit">
    <molecule>Glycoprotein G2</molecule>
    <text evidence="2">Homotrimer. Interacts with the stable signal peptide. In pre-fusion state, G2 homotrimers bind G1 homotrimers via ionic interactions. Part of the GP complex (GP-C) together with glycoprotein G1 and the stable signal peptide. Acidification in the endosome triggers rearrangements, which ultimately leads to a 6 helix bundle formed by the two heptad repeat domains (HR1 and HR2) in post-fusion state. The GP-complex interacts with protein Z, which interacts with ribonucleocapsid; these interactions may induce virion budding.</text>
</comment>
<comment type="subcellular location">
    <molecule>Stable signal peptide</molecule>
    <subcellularLocation>
        <location evidence="2">Virion membrane</location>
        <topology evidence="2">Single-pass type II membrane protein</topology>
    </subcellularLocation>
    <subcellularLocation>
        <location evidence="2">Host endoplasmic reticulum membrane</location>
        <topology evidence="2">Single-pass type II membrane protein</topology>
    </subcellularLocation>
    <subcellularLocation>
        <location evidence="2">Host Golgi apparatus membrane</location>
        <topology evidence="2">Single-pass type II membrane protein</topology>
    </subcellularLocation>
    <subcellularLocation>
        <location evidence="2">Host cell membrane</location>
        <topology evidence="2">Single-pass type II membrane protein</topology>
    </subcellularLocation>
</comment>
<comment type="subcellular location">
    <molecule>Glycoprotein G1</molecule>
    <subcellularLocation>
        <location evidence="2">Virion membrane</location>
        <topology evidence="2">Peripheral membrane protein</topology>
    </subcellularLocation>
    <subcellularLocation>
        <location evidence="2">Host endoplasmic reticulum membrane</location>
        <topology evidence="2">Peripheral membrane protein</topology>
    </subcellularLocation>
    <subcellularLocation>
        <location evidence="2">Host Golgi apparatus membrane</location>
        <topology evidence="2">Peripheral membrane protein</topology>
    </subcellularLocation>
    <subcellularLocation>
        <location evidence="2">Host cell membrane</location>
        <topology evidence="2">Peripheral membrane protein</topology>
    </subcellularLocation>
</comment>
<comment type="subcellular location">
    <molecule>Glycoprotein G2</molecule>
    <subcellularLocation>
        <location evidence="2">Virion membrane</location>
        <topology evidence="2">Single-pass membrane protein</topology>
    </subcellularLocation>
    <subcellularLocation>
        <location evidence="2">Host endoplasmic reticulum membrane</location>
        <topology evidence="2">Single-pass membrane protein</topology>
    </subcellularLocation>
    <subcellularLocation>
        <location evidence="2">Host Golgi apparatus membrane</location>
        <topology evidence="2">Single-pass membrane protein</topology>
    </subcellularLocation>
    <subcellularLocation>
        <location evidence="2">Host cell membrane</location>
        <topology evidence="2">Single-pass membrane protein</topology>
    </subcellularLocation>
    <text evidence="2">Binding to the stable signal peptide masks endogenous ER localization signals in the cytoplasmic domain of G2 to ensure that only the fully assembled, tripartite GP complex is transported for virion assembly.</text>
</comment>
<comment type="domain">
    <molecule>Stable signal peptide</molecule>
    <text evidence="2">The N-terminus is localized at the extracellular side of the GP-C, with a part embedded in the membrane probably.</text>
</comment>
<comment type="domain">
    <molecule>Glycoprotein G2</molecule>
    <text evidence="2">Contains 1 fusion peptide at the N-terminus, 2 heptad repeats domains HR1 and HR2 and, at the C-terminus, a cytoplasmic domain that plays a role in ER location. Also contains a zinc-binding domain that allows SSP retention in the GPC complex by accepting a cysteine from SSP as the fourth ligand.</text>
</comment>
<comment type="PTM">
    <molecule>Pre-glycoprotein polyprotein GP complex</molecule>
    <text evidence="2">Specific enzymatic cleavages in vivo yield mature proteins. GP-C polyprotein is cleaved in the endoplasmic reticulum by the host protease MBTPS1. Only cleaved glycoprotein is incorporated into virions.</text>
</comment>
<comment type="PTM">
    <molecule>Stable signal peptide</molecule>
    <text evidence="2">The SSP remains stably associated with the GP complex following cleavage by signal peptidase and plays crucial roles in the trafficking of GP through the secretory pathway.</text>
</comment>
<comment type="PTM">
    <molecule>Stable signal peptide</molecule>
    <text evidence="2">Myristoylation is necessary for GP2-mediated fusion activity.</text>
</comment>
<comment type="similarity">
    <text evidence="2">Belongs to the arenaviridae GPC protein family.</text>
</comment>
<gene>
    <name evidence="2" type="primary">GPC</name>
    <name type="synonym">GP-C</name>
</gene>
<feature type="initiator methionine" description="Removed; by host" evidence="2">
    <location>
        <position position="1"/>
    </location>
</feature>
<feature type="chain" id="PRO_0000353864" description="Pre-glycoprotein polyprotein GP complex" evidence="2">
    <location>
        <begin position="2"/>
        <end position="495"/>
    </location>
</feature>
<feature type="chain" id="PRO_0000353865" description="Stable signal peptide" evidence="2">
    <location>
        <begin position="2"/>
        <end position="58"/>
    </location>
</feature>
<feature type="chain" id="PRO_0000036611" description="Glycoprotein G1" evidence="2">
    <location>
        <begin position="59"/>
        <end position="261"/>
    </location>
</feature>
<feature type="chain" id="PRO_0000036612" description="Glycoprotein G2" evidence="2">
    <location>
        <begin position="262"/>
        <end position="495"/>
    </location>
</feature>
<feature type="topological domain" description="Extracellular" evidence="2">
    <location>
        <begin position="2"/>
        <end position="17"/>
    </location>
</feature>
<feature type="transmembrane region" description="Helical" evidence="2">
    <location>
        <begin position="18"/>
        <end position="33"/>
    </location>
</feature>
<feature type="topological domain" description="Cytoplasmic" evidence="2">
    <location>
        <begin position="34"/>
        <end position="58"/>
    </location>
</feature>
<feature type="topological domain" description="Extracellular" evidence="2">
    <location>
        <begin position="59"/>
        <end position="434"/>
    </location>
</feature>
<feature type="transmembrane region" description="Helical" evidence="2">
    <location>
        <begin position="435"/>
        <end position="455"/>
    </location>
</feature>
<feature type="topological domain" description="Cytoplasmic" evidence="2">
    <location>
        <begin position="456"/>
        <end position="495"/>
    </location>
</feature>
<feature type="binding site" evidence="2">
    <location>
        <position position="57"/>
    </location>
    <ligand>
        <name>Zn(2+)</name>
        <dbReference type="ChEBI" id="CHEBI:29105"/>
        <label>1</label>
    </ligand>
</feature>
<feature type="binding site" evidence="2">
    <location>
        <position position="457"/>
    </location>
    <ligand>
        <name>Zn(2+)</name>
        <dbReference type="ChEBI" id="CHEBI:29105"/>
        <label>2</label>
    </ligand>
</feature>
<feature type="binding site" evidence="2">
    <location>
        <position position="459"/>
    </location>
    <ligand>
        <name>Zn(2+)</name>
        <dbReference type="ChEBI" id="CHEBI:29105"/>
        <label>2</label>
    </ligand>
</feature>
<feature type="binding site" evidence="2">
    <location>
        <position position="465"/>
    </location>
    <ligand>
        <name>Zn(2+)</name>
        <dbReference type="ChEBI" id="CHEBI:29105"/>
        <label>2</label>
    </ligand>
</feature>
<feature type="binding site" evidence="2">
    <location>
        <position position="469"/>
    </location>
    <ligand>
        <name>Zn(2+)</name>
        <dbReference type="ChEBI" id="CHEBI:29105"/>
        <label>1</label>
    </ligand>
</feature>
<feature type="binding site" evidence="2">
    <location>
        <position position="477"/>
    </location>
    <ligand>
        <name>Zn(2+)</name>
        <dbReference type="ChEBI" id="CHEBI:29105"/>
        <label>1</label>
    </ligand>
</feature>
<feature type="binding site" evidence="2">
    <location>
        <position position="479"/>
    </location>
    <ligand>
        <name>Zn(2+)</name>
        <dbReference type="ChEBI" id="CHEBI:29105"/>
        <label>1</label>
    </ligand>
</feature>
<feature type="binding site" evidence="2">
    <location>
        <position position="495"/>
    </location>
    <ligand>
        <name>Zn(2+)</name>
        <dbReference type="ChEBI" id="CHEBI:29105"/>
        <label>2</label>
    </ligand>
</feature>
<feature type="site" description="Important for GP-C-mediated membrane fusion" evidence="1">
    <location>
        <position position="33"/>
    </location>
</feature>
<feature type="site" description="Cleavage; by host signal peptidase" evidence="2">
    <location>
        <begin position="58"/>
        <end position="59"/>
    </location>
</feature>
<feature type="site" description="Cleavage; by host MBTPS1" evidence="2">
    <location>
        <begin position="261"/>
        <end position="262"/>
    </location>
</feature>
<feature type="lipid moiety-binding region" description="N-myristoyl glycine; by host" evidence="2">
    <location>
        <position position="2"/>
    </location>
</feature>
<feature type="glycosylation site" description="N-linked (GlcNAc...) asparagine; by host" evidence="2">
    <location>
        <position position="95"/>
    </location>
</feature>
<feature type="glycosylation site" description="N-linked (GlcNAc...) asparagine; by host" evidence="2">
    <location>
        <position position="188"/>
    </location>
</feature>
<feature type="glycosylation site" description="N-linked (GlcNAc...) asparagine; by host" evidence="2">
    <location>
        <position position="367"/>
    </location>
</feature>
<feature type="glycosylation site" description="N-linked (GlcNAc...) asparagine; by host" evidence="2">
    <location>
        <position position="375"/>
    </location>
</feature>
<feature type="glycosylation site" description="N-linked (GlcNAc...) asparagine; by host" evidence="2">
    <location>
        <position position="392"/>
    </location>
</feature>
<feature type="glycosylation site" description="N-linked (GlcNAc...) asparagine; by host" evidence="2">
    <location>
        <position position="397"/>
    </location>
</feature>
<feature type="disulfide bond" evidence="2">
    <location>
        <begin position="92"/>
        <end position="236"/>
    </location>
</feature>
<feature type="disulfide bond" evidence="2">
    <location>
        <begin position="281"/>
        <end position="294"/>
    </location>
</feature>
<feature type="disulfide bond" evidence="2">
    <location>
        <begin position="303"/>
        <end position="312"/>
    </location>
</feature>
<feature type="disulfide bond" evidence="2">
    <location>
        <begin position="366"/>
        <end position="387"/>
    </location>
</feature>
<dbReference type="EMBL" id="M20304">
    <property type="protein sequence ID" value="AAA47902.1"/>
    <property type="molecule type" value="Genomic_RNA"/>
</dbReference>
<dbReference type="SMR" id="P18141"/>
<dbReference type="GlyCosmos" id="P18141">
    <property type="glycosylation" value="10 sites, No reported glycans"/>
</dbReference>
<dbReference type="KEGG" id="vg:956596"/>
<dbReference type="Proteomes" id="UP000008026">
    <property type="component" value="Genome"/>
</dbReference>
<dbReference type="GO" id="GO:0044167">
    <property type="term" value="C:host cell endoplasmic reticulum membrane"/>
    <property type="evidence" value="ECO:0007669"/>
    <property type="project" value="UniProtKB-SubCell"/>
</dbReference>
<dbReference type="GO" id="GO:0044178">
    <property type="term" value="C:host cell Golgi membrane"/>
    <property type="evidence" value="ECO:0007669"/>
    <property type="project" value="UniProtKB-SubCell"/>
</dbReference>
<dbReference type="GO" id="GO:0020002">
    <property type="term" value="C:host cell plasma membrane"/>
    <property type="evidence" value="ECO:0007669"/>
    <property type="project" value="UniProtKB-SubCell"/>
</dbReference>
<dbReference type="GO" id="GO:0016020">
    <property type="term" value="C:membrane"/>
    <property type="evidence" value="ECO:0007669"/>
    <property type="project" value="UniProtKB-UniRule"/>
</dbReference>
<dbReference type="GO" id="GO:0019031">
    <property type="term" value="C:viral envelope"/>
    <property type="evidence" value="ECO:0007669"/>
    <property type="project" value="UniProtKB-UniRule"/>
</dbReference>
<dbReference type="GO" id="GO:0055036">
    <property type="term" value="C:virion membrane"/>
    <property type="evidence" value="ECO:0007669"/>
    <property type="project" value="UniProtKB-SubCell"/>
</dbReference>
<dbReference type="GO" id="GO:0046872">
    <property type="term" value="F:metal ion binding"/>
    <property type="evidence" value="ECO:0007669"/>
    <property type="project" value="UniProtKB-KW"/>
</dbReference>
<dbReference type="GO" id="GO:0039654">
    <property type="term" value="P:fusion of virus membrane with host endosome membrane"/>
    <property type="evidence" value="ECO:0007669"/>
    <property type="project" value="UniProtKB-UniRule"/>
</dbReference>
<dbReference type="GO" id="GO:0019065">
    <property type="term" value="P:receptor-mediated endocytosis of virus by host cell"/>
    <property type="evidence" value="ECO:0007669"/>
    <property type="project" value="UniProtKB-UniRule"/>
</dbReference>
<dbReference type="GO" id="GO:0019062">
    <property type="term" value="P:virion attachment to host cell"/>
    <property type="evidence" value="ECO:0007669"/>
    <property type="project" value="UniProtKB-UniRule"/>
</dbReference>
<dbReference type="Gene3D" id="6.10.140.1590">
    <property type="match status" value="1"/>
</dbReference>
<dbReference type="Gene3D" id="2.20.28.180">
    <property type="entry name" value="Arenavirus glycoprotein, zinc binding domain"/>
    <property type="match status" value="1"/>
</dbReference>
<dbReference type="HAMAP" id="MF_04084">
    <property type="entry name" value="ARENA_GPC"/>
    <property type="match status" value="1"/>
</dbReference>
<dbReference type="InterPro" id="IPR001535">
    <property type="entry name" value="Arena_glycoprot"/>
</dbReference>
<dbReference type="InterPro" id="IPR043015">
    <property type="entry name" value="Arena_glycoprot_zinc-bd"/>
</dbReference>
<dbReference type="Pfam" id="PF00798">
    <property type="entry name" value="Arena_glycoprot"/>
    <property type="match status" value="1"/>
</dbReference>
<dbReference type="PIRSF" id="PIRSF004028">
    <property type="entry name" value="GPC_ArenaV"/>
    <property type="match status" value="1"/>
</dbReference>